<feature type="chain" id="PRO_0000157068" description="Thiamine-phosphate synthase">
    <location>
        <begin position="1"/>
        <end position="211"/>
    </location>
</feature>
<feature type="binding site" evidence="1">
    <location>
        <begin position="36"/>
        <end position="40"/>
    </location>
    <ligand>
        <name>4-amino-2-methyl-5-(diphosphooxymethyl)pyrimidine</name>
        <dbReference type="ChEBI" id="CHEBI:57841"/>
    </ligand>
</feature>
<feature type="binding site" evidence="1">
    <location>
        <position position="68"/>
    </location>
    <ligand>
        <name>4-amino-2-methyl-5-(diphosphooxymethyl)pyrimidine</name>
        <dbReference type="ChEBI" id="CHEBI:57841"/>
    </ligand>
</feature>
<feature type="binding site" evidence="1">
    <location>
        <position position="69"/>
    </location>
    <ligand>
        <name>Mg(2+)</name>
        <dbReference type="ChEBI" id="CHEBI:18420"/>
    </ligand>
</feature>
<feature type="binding site" evidence="1">
    <location>
        <position position="88"/>
    </location>
    <ligand>
        <name>Mg(2+)</name>
        <dbReference type="ChEBI" id="CHEBI:18420"/>
    </ligand>
</feature>
<feature type="binding site" evidence="1">
    <location>
        <position position="107"/>
    </location>
    <ligand>
        <name>4-amino-2-methyl-5-(diphosphooxymethyl)pyrimidine</name>
        <dbReference type="ChEBI" id="CHEBI:57841"/>
    </ligand>
</feature>
<feature type="binding site" evidence="1">
    <location>
        <begin position="133"/>
        <end position="135"/>
    </location>
    <ligand>
        <name>2-[(2R,5Z)-2-carboxy-4-methylthiazol-5(2H)-ylidene]ethyl phosphate</name>
        <dbReference type="ChEBI" id="CHEBI:62899"/>
    </ligand>
</feature>
<feature type="binding site" evidence="1">
    <location>
        <position position="136"/>
    </location>
    <ligand>
        <name>4-amino-2-methyl-5-(diphosphooxymethyl)pyrimidine</name>
        <dbReference type="ChEBI" id="CHEBI:57841"/>
    </ligand>
</feature>
<feature type="binding site" evidence="1">
    <location>
        <position position="167"/>
    </location>
    <ligand>
        <name>2-[(2R,5Z)-2-carboxy-4-methylthiazol-5(2H)-ylidene]ethyl phosphate</name>
        <dbReference type="ChEBI" id="CHEBI:62899"/>
    </ligand>
</feature>
<feature type="binding site" evidence="1">
    <location>
        <begin position="187"/>
        <end position="188"/>
    </location>
    <ligand>
        <name>2-[(2R,5Z)-2-carboxy-4-methylthiazol-5(2H)-ylidene]ethyl phosphate</name>
        <dbReference type="ChEBI" id="CHEBI:62899"/>
    </ligand>
</feature>
<name>THIE_HALMA</name>
<gene>
    <name evidence="1" type="primary">thiE</name>
    <name type="ordered locus">rrnAC2143</name>
</gene>
<keyword id="KW-0460">Magnesium</keyword>
<keyword id="KW-0479">Metal-binding</keyword>
<keyword id="KW-1185">Reference proteome</keyword>
<keyword id="KW-0784">Thiamine biosynthesis</keyword>
<keyword id="KW-0808">Transferase</keyword>
<reference key="1">
    <citation type="journal article" date="2004" name="Genome Res.">
        <title>Genome sequence of Haloarcula marismortui: a halophilic archaeon from the Dead Sea.</title>
        <authorList>
            <person name="Baliga N.S."/>
            <person name="Bonneau R."/>
            <person name="Facciotti M.T."/>
            <person name="Pan M."/>
            <person name="Glusman G."/>
            <person name="Deutsch E.W."/>
            <person name="Shannon P."/>
            <person name="Chiu Y."/>
            <person name="Weng R.S."/>
            <person name="Gan R.R."/>
            <person name="Hung P."/>
            <person name="Date S.V."/>
            <person name="Marcotte E."/>
            <person name="Hood L."/>
            <person name="Ng W.V."/>
        </authorList>
    </citation>
    <scope>NUCLEOTIDE SEQUENCE [LARGE SCALE GENOMIC DNA]</scope>
    <source>
        <strain>ATCC 43049 / DSM 3752 / JCM 8966 / VKM B-1809</strain>
    </source>
</reference>
<proteinExistence type="inferred from homology"/>
<accession>Q5V0G6</accession>
<sequence length="211" mass="21897">MVDWDVYLVTQASLSAGRTTDEIVAEAIESGVGVVQLREKNRTARERYELGQKLRELTREADVTFVVNDRIDLAQAIDADGVHLGDDDLPVSVARDILGDDAVIGRSVSTVEDAREAATAGADYLGVGAVFATGSKDDIDDEEYAVGTDRVAAIAEAVDIPFVGIGGITAGNATAVVDAGADGVAVITEITKADDPAAAAEALHSAVEQGR</sequence>
<protein>
    <recommendedName>
        <fullName evidence="1">Thiamine-phosphate synthase</fullName>
        <shortName evidence="1">TP synthase</shortName>
        <shortName evidence="1">TPS</shortName>
        <ecNumber evidence="1">2.5.1.3</ecNumber>
    </recommendedName>
    <alternativeName>
        <fullName evidence="1">Thiamine-phosphate pyrophosphorylase</fullName>
        <shortName evidence="1">TMP pyrophosphorylase</shortName>
        <shortName evidence="1">TMP-PPase</shortName>
    </alternativeName>
</protein>
<dbReference type="EC" id="2.5.1.3" evidence="1"/>
<dbReference type="EMBL" id="AY596297">
    <property type="protein sequence ID" value="AAV46987.1"/>
    <property type="molecule type" value="Genomic_DNA"/>
</dbReference>
<dbReference type="RefSeq" id="WP_011224052.1">
    <property type="nucleotide sequence ID" value="NC_006396.1"/>
</dbReference>
<dbReference type="SMR" id="Q5V0G6"/>
<dbReference type="STRING" id="272569.rrnAC2143"/>
<dbReference type="PaxDb" id="272569-rrnAC2143"/>
<dbReference type="EnsemblBacteria" id="AAV46987">
    <property type="protein sequence ID" value="AAV46987"/>
    <property type="gene ID" value="rrnAC2143"/>
</dbReference>
<dbReference type="GeneID" id="40153050"/>
<dbReference type="KEGG" id="hma:rrnAC2143"/>
<dbReference type="PATRIC" id="fig|272569.17.peg.2785"/>
<dbReference type="eggNOG" id="arCOG01089">
    <property type="taxonomic scope" value="Archaea"/>
</dbReference>
<dbReference type="HOGENOM" id="CLU_018272_3_2_2"/>
<dbReference type="UniPathway" id="UPA00060">
    <property type="reaction ID" value="UER00141"/>
</dbReference>
<dbReference type="Proteomes" id="UP000001169">
    <property type="component" value="Chromosome I"/>
</dbReference>
<dbReference type="GO" id="GO:0005737">
    <property type="term" value="C:cytoplasm"/>
    <property type="evidence" value="ECO:0007669"/>
    <property type="project" value="TreeGrafter"/>
</dbReference>
<dbReference type="GO" id="GO:0000287">
    <property type="term" value="F:magnesium ion binding"/>
    <property type="evidence" value="ECO:0007669"/>
    <property type="project" value="UniProtKB-UniRule"/>
</dbReference>
<dbReference type="GO" id="GO:0004789">
    <property type="term" value="F:thiamine-phosphate diphosphorylase activity"/>
    <property type="evidence" value="ECO:0007669"/>
    <property type="project" value="UniProtKB-UniRule"/>
</dbReference>
<dbReference type="GO" id="GO:0009228">
    <property type="term" value="P:thiamine biosynthetic process"/>
    <property type="evidence" value="ECO:0007669"/>
    <property type="project" value="UniProtKB-KW"/>
</dbReference>
<dbReference type="GO" id="GO:0009229">
    <property type="term" value="P:thiamine diphosphate biosynthetic process"/>
    <property type="evidence" value="ECO:0007669"/>
    <property type="project" value="UniProtKB-UniRule"/>
</dbReference>
<dbReference type="CDD" id="cd00564">
    <property type="entry name" value="TMP_TenI"/>
    <property type="match status" value="1"/>
</dbReference>
<dbReference type="FunFam" id="3.20.20.70:FF:000096">
    <property type="entry name" value="Thiamine-phosphate synthase"/>
    <property type="match status" value="1"/>
</dbReference>
<dbReference type="Gene3D" id="3.20.20.70">
    <property type="entry name" value="Aldolase class I"/>
    <property type="match status" value="1"/>
</dbReference>
<dbReference type="HAMAP" id="MF_00097">
    <property type="entry name" value="TMP_synthase"/>
    <property type="match status" value="1"/>
</dbReference>
<dbReference type="InterPro" id="IPR013785">
    <property type="entry name" value="Aldolase_TIM"/>
</dbReference>
<dbReference type="InterPro" id="IPR036206">
    <property type="entry name" value="ThiamineP_synth_sf"/>
</dbReference>
<dbReference type="InterPro" id="IPR022998">
    <property type="entry name" value="ThiamineP_synth_TenI"/>
</dbReference>
<dbReference type="InterPro" id="IPR034291">
    <property type="entry name" value="TMP_synthase"/>
</dbReference>
<dbReference type="NCBIfam" id="TIGR00693">
    <property type="entry name" value="thiE"/>
    <property type="match status" value="1"/>
</dbReference>
<dbReference type="PANTHER" id="PTHR20857">
    <property type="entry name" value="THIAMINE-PHOSPHATE PYROPHOSPHORYLASE"/>
    <property type="match status" value="1"/>
</dbReference>
<dbReference type="PANTHER" id="PTHR20857:SF15">
    <property type="entry name" value="THIAMINE-PHOSPHATE SYNTHASE"/>
    <property type="match status" value="1"/>
</dbReference>
<dbReference type="Pfam" id="PF02581">
    <property type="entry name" value="TMP-TENI"/>
    <property type="match status" value="1"/>
</dbReference>
<dbReference type="SUPFAM" id="SSF51391">
    <property type="entry name" value="Thiamin phosphate synthase"/>
    <property type="match status" value="1"/>
</dbReference>
<evidence type="ECO:0000255" key="1">
    <source>
        <dbReference type="HAMAP-Rule" id="MF_00097"/>
    </source>
</evidence>
<organism>
    <name type="scientific">Haloarcula marismortui (strain ATCC 43049 / DSM 3752 / JCM 8966 / VKM B-1809)</name>
    <name type="common">Halobacterium marismortui</name>
    <dbReference type="NCBI Taxonomy" id="272569"/>
    <lineage>
        <taxon>Archaea</taxon>
        <taxon>Methanobacteriati</taxon>
        <taxon>Methanobacteriota</taxon>
        <taxon>Stenosarchaea group</taxon>
        <taxon>Halobacteria</taxon>
        <taxon>Halobacteriales</taxon>
        <taxon>Haloarculaceae</taxon>
        <taxon>Haloarcula</taxon>
    </lineage>
</organism>
<comment type="function">
    <text evidence="1">Condenses 4-methyl-5-(beta-hydroxyethyl)thiazole monophosphate (THZ-P) and 2-methyl-4-amino-5-hydroxymethyl pyrimidine pyrophosphate (HMP-PP) to form thiamine monophosphate (TMP).</text>
</comment>
<comment type="catalytic activity">
    <reaction evidence="1">
        <text>2-[(2R,5Z)-2-carboxy-4-methylthiazol-5(2H)-ylidene]ethyl phosphate + 4-amino-2-methyl-5-(diphosphooxymethyl)pyrimidine + 2 H(+) = thiamine phosphate + CO2 + diphosphate</text>
        <dbReference type="Rhea" id="RHEA:47844"/>
        <dbReference type="ChEBI" id="CHEBI:15378"/>
        <dbReference type="ChEBI" id="CHEBI:16526"/>
        <dbReference type="ChEBI" id="CHEBI:33019"/>
        <dbReference type="ChEBI" id="CHEBI:37575"/>
        <dbReference type="ChEBI" id="CHEBI:57841"/>
        <dbReference type="ChEBI" id="CHEBI:62899"/>
        <dbReference type="EC" id="2.5.1.3"/>
    </reaction>
</comment>
<comment type="catalytic activity">
    <reaction evidence="1">
        <text>2-(2-carboxy-4-methylthiazol-5-yl)ethyl phosphate + 4-amino-2-methyl-5-(diphosphooxymethyl)pyrimidine + 2 H(+) = thiamine phosphate + CO2 + diphosphate</text>
        <dbReference type="Rhea" id="RHEA:47848"/>
        <dbReference type="ChEBI" id="CHEBI:15378"/>
        <dbReference type="ChEBI" id="CHEBI:16526"/>
        <dbReference type="ChEBI" id="CHEBI:33019"/>
        <dbReference type="ChEBI" id="CHEBI:37575"/>
        <dbReference type="ChEBI" id="CHEBI:57841"/>
        <dbReference type="ChEBI" id="CHEBI:62890"/>
        <dbReference type="EC" id="2.5.1.3"/>
    </reaction>
</comment>
<comment type="catalytic activity">
    <reaction evidence="1">
        <text>4-methyl-5-(2-phosphooxyethyl)-thiazole + 4-amino-2-methyl-5-(diphosphooxymethyl)pyrimidine + H(+) = thiamine phosphate + diphosphate</text>
        <dbReference type="Rhea" id="RHEA:22328"/>
        <dbReference type="ChEBI" id="CHEBI:15378"/>
        <dbReference type="ChEBI" id="CHEBI:33019"/>
        <dbReference type="ChEBI" id="CHEBI:37575"/>
        <dbReference type="ChEBI" id="CHEBI:57841"/>
        <dbReference type="ChEBI" id="CHEBI:58296"/>
        <dbReference type="EC" id="2.5.1.3"/>
    </reaction>
</comment>
<comment type="cofactor">
    <cofactor evidence="1">
        <name>Mg(2+)</name>
        <dbReference type="ChEBI" id="CHEBI:18420"/>
    </cofactor>
    <text evidence="1">Binds 1 Mg(2+) ion per subunit.</text>
</comment>
<comment type="pathway">
    <text evidence="1">Cofactor biosynthesis; thiamine diphosphate biosynthesis; thiamine phosphate from 4-amino-2-methyl-5-diphosphomethylpyrimidine and 4-methyl-5-(2-phosphoethyl)-thiazole: step 1/1.</text>
</comment>
<comment type="similarity">
    <text evidence="1">Belongs to the thiamine-phosphate synthase family.</text>
</comment>